<feature type="chain" id="PRO_0000331250" description="BTB/POZ domain-containing adapter for CUL3-mediated RhoA degradation protein 2">
    <location>
        <begin position="1"/>
        <end position="314"/>
    </location>
</feature>
<feature type="domain" description="BTB" evidence="2">
    <location>
        <begin position="32"/>
        <end position="100"/>
    </location>
</feature>
<comment type="function">
    <text evidence="1">Substrate-specific adapter of a BCR (BTB-CUL3-RBX1) E3 ubiquitin-protein ligase complex involved in regulation of cytoskeleton structure. The BCR(TNFAIP1) E3 ubiquitin ligase complex mediates the ubiquitination of target proteins, leading to their degradation by the proteasome (By similarity).</text>
</comment>
<comment type="pathway">
    <text>Protein modification; protein ubiquitination.</text>
</comment>
<comment type="subunit">
    <text>Component of the BCR(TNFAIP1) E3 ubiquitin ligase complex, at least composed of CUL3, TNFAIP1/BACURD2 and RBX1.</text>
</comment>
<comment type="subcellular location">
    <subcellularLocation>
        <location evidence="1">Cytoplasm</location>
    </subcellularLocation>
    <subcellularLocation>
        <location evidence="1">Nucleus</location>
    </subcellularLocation>
    <subcellularLocation>
        <location evidence="1">Endosome</location>
    </subcellularLocation>
</comment>
<comment type="similarity">
    <text evidence="3">Belongs to the BACURD family.</text>
</comment>
<sequence length="314" mass="36032">MSGDTCLTTTLCPAVGPKPKTCSFKVGSLGNKYVRLNVGGSLYYTTVQVLTRHDTMLKAMFSGRMEVLTDKEGWILIDRCGKHFGTILNYLRDDTIALPKHRQEIKELMAEAKYYLIQGLVDMCQAALQDKKDLYEPVCNIPIITSPKEEERLIESSMKPVVKLLYNRSNNKYSYTSNSDDNLLKNIELFDKLSLRFNGRVLFIKDVIGDEICCWSFYGQGRKLAEVCCTSIVYATEKKQTKVEFPEARIYEETLNVLLYETPRVPDNSLLEATSRSRSQASHSEDDDGFELRDRVRRIHVKRYSTYDDRQLGH</sequence>
<keyword id="KW-0963">Cytoplasm</keyword>
<keyword id="KW-0967">Endosome</keyword>
<keyword id="KW-0539">Nucleus</keyword>
<keyword id="KW-1185">Reference proteome</keyword>
<keyword id="KW-0833">Ubl conjugation pathway</keyword>
<organism>
    <name type="scientific">Gallus gallus</name>
    <name type="common">Chicken</name>
    <dbReference type="NCBI Taxonomy" id="9031"/>
    <lineage>
        <taxon>Eukaryota</taxon>
        <taxon>Metazoa</taxon>
        <taxon>Chordata</taxon>
        <taxon>Craniata</taxon>
        <taxon>Vertebrata</taxon>
        <taxon>Euteleostomi</taxon>
        <taxon>Archelosauria</taxon>
        <taxon>Archosauria</taxon>
        <taxon>Dinosauria</taxon>
        <taxon>Saurischia</taxon>
        <taxon>Theropoda</taxon>
        <taxon>Coelurosauria</taxon>
        <taxon>Aves</taxon>
        <taxon>Neognathae</taxon>
        <taxon>Galloanserae</taxon>
        <taxon>Galliformes</taxon>
        <taxon>Phasianidae</taxon>
        <taxon>Phasianinae</taxon>
        <taxon>Gallus</taxon>
    </lineage>
</organism>
<reference key="1">
    <citation type="journal article" date="2005" name="Genome Biol.">
        <title>Full-length cDNAs from chicken bursal lymphocytes to facilitate gene function analysis.</title>
        <authorList>
            <person name="Caldwell R.B."/>
            <person name="Kierzek A.M."/>
            <person name="Arakawa H."/>
            <person name="Bezzubov Y."/>
            <person name="Zaim J."/>
            <person name="Fiedler P."/>
            <person name="Kutter S."/>
            <person name="Blagodatski A."/>
            <person name="Kostovska D."/>
            <person name="Koter M."/>
            <person name="Plachy J."/>
            <person name="Carninci P."/>
            <person name="Hayashizaki Y."/>
            <person name="Buerstedde J.-M."/>
        </authorList>
    </citation>
    <scope>NUCLEOTIDE SEQUENCE [LARGE SCALE MRNA]</scope>
    <source>
        <strain>CB</strain>
        <tissue>Bursa of Fabricius</tissue>
    </source>
</reference>
<proteinExistence type="evidence at transcript level"/>
<gene>
    <name type="primary">TNFAIP1</name>
    <name type="ORF">RCJMB04_19f9</name>
</gene>
<protein>
    <recommendedName>
        <fullName>BTB/POZ domain-containing adapter for CUL3-mediated RhoA degradation protein 2</fullName>
    </recommendedName>
    <alternativeName>
        <fullName>BTB/POZ domain-containing protein TNFAIP1</fullName>
    </alternativeName>
</protein>
<dbReference type="EMBL" id="AJ851702">
    <property type="protein sequence ID" value="CAH65336.1"/>
    <property type="molecule type" value="mRNA"/>
</dbReference>
<dbReference type="RefSeq" id="NP_001025897.1">
    <property type="nucleotide sequence ID" value="NM_001030726.2"/>
</dbReference>
<dbReference type="RefSeq" id="XP_015151290.2">
    <property type="nucleotide sequence ID" value="XM_015295804.4"/>
</dbReference>
<dbReference type="RefSeq" id="XP_046758373.1">
    <property type="nucleotide sequence ID" value="XM_046902417.1"/>
</dbReference>
<dbReference type="RefSeq" id="XP_046758374.1">
    <property type="nucleotide sequence ID" value="XM_046902418.1"/>
</dbReference>
<dbReference type="RefSeq" id="XP_046786116.1">
    <property type="nucleotide sequence ID" value="XM_046930160.1"/>
</dbReference>
<dbReference type="RefSeq" id="XP_046786117.1">
    <property type="nucleotide sequence ID" value="XM_046930161.1"/>
</dbReference>
<dbReference type="RefSeq" id="XP_046786118.1">
    <property type="nucleotide sequence ID" value="XM_046930162.1"/>
</dbReference>
<dbReference type="RefSeq" id="XP_046786119.1">
    <property type="nucleotide sequence ID" value="XM_046930163.1"/>
</dbReference>
<dbReference type="SMR" id="Q5F3E8"/>
<dbReference type="FunCoup" id="Q5F3E8">
    <property type="interactions" value="759"/>
</dbReference>
<dbReference type="PaxDb" id="9031-ENSGALP00000009155"/>
<dbReference type="Ensembl" id="ENSGALT00010071466.1">
    <property type="protein sequence ID" value="ENSGALP00010044156.1"/>
    <property type="gene ID" value="ENSGALG00010029570.1"/>
</dbReference>
<dbReference type="GeneID" id="417672"/>
<dbReference type="KEGG" id="gga:417672"/>
<dbReference type="CTD" id="7126"/>
<dbReference type="VEuPathDB" id="HostDB:geneid_417672"/>
<dbReference type="eggNOG" id="KOG2716">
    <property type="taxonomic scope" value="Eukaryota"/>
</dbReference>
<dbReference type="GeneTree" id="ENSGT00950000183143"/>
<dbReference type="HOGENOM" id="CLU_060008_0_0_1"/>
<dbReference type="InParanoid" id="Q5F3E8"/>
<dbReference type="OMA" id="EMSGDTC"/>
<dbReference type="OrthoDB" id="2333377at2759"/>
<dbReference type="PhylomeDB" id="Q5F3E8"/>
<dbReference type="TreeFam" id="TF315649"/>
<dbReference type="Reactome" id="R-GGA-9696264">
    <property type="pathway name" value="RND3 GTPase cycle"/>
</dbReference>
<dbReference type="Reactome" id="R-GGA-9696270">
    <property type="pathway name" value="RND2 GTPase cycle"/>
</dbReference>
<dbReference type="UniPathway" id="UPA00143"/>
<dbReference type="PRO" id="PR:Q5F3E8"/>
<dbReference type="Proteomes" id="UP000000539">
    <property type="component" value="Chromosome 19"/>
</dbReference>
<dbReference type="Bgee" id="ENSGALG00000005737">
    <property type="expression patterns" value="Expressed in spermatid and 14 other cell types or tissues"/>
</dbReference>
<dbReference type="GO" id="GO:0031463">
    <property type="term" value="C:Cul3-RING ubiquitin ligase complex"/>
    <property type="evidence" value="ECO:0000250"/>
    <property type="project" value="UniProtKB"/>
</dbReference>
<dbReference type="GO" id="GO:0005737">
    <property type="term" value="C:cytoplasm"/>
    <property type="evidence" value="ECO:0000250"/>
    <property type="project" value="UniProtKB"/>
</dbReference>
<dbReference type="GO" id="GO:0005768">
    <property type="term" value="C:endosome"/>
    <property type="evidence" value="ECO:0000250"/>
    <property type="project" value="UniProtKB"/>
</dbReference>
<dbReference type="GO" id="GO:0005634">
    <property type="term" value="C:nucleus"/>
    <property type="evidence" value="ECO:0007669"/>
    <property type="project" value="UniProtKB-SubCell"/>
</dbReference>
<dbReference type="GO" id="GO:0031267">
    <property type="term" value="F:small GTPase binding"/>
    <property type="evidence" value="ECO:0000250"/>
    <property type="project" value="UniProtKB"/>
</dbReference>
<dbReference type="GO" id="GO:0016477">
    <property type="term" value="P:cell migration"/>
    <property type="evidence" value="ECO:0000250"/>
    <property type="project" value="UniProtKB"/>
</dbReference>
<dbReference type="GO" id="GO:0006955">
    <property type="term" value="P:immune response"/>
    <property type="evidence" value="ECO:0000250"/>
    <property type="project" value="UniProtKB"/>
</dbReference>
<dbReference type="GO" id="GO:0035024">
    <property type="term" value="P:negative regulation of Rho protein signal transduction"/>
    <property type="evidence" value="ECO:0000250"/>
    <property type="project" value="UniProtKB"/>
</dbReference>
<dbReference type="GO" id="GO:0043161">
    <property type="term" value="P:proteasome-mediated ubiquitin-dependent protein catabolic process"/>
    <property type="evidence" value="ECO:0000250"/>
    <property type="project" value="UniProtKB"/>
</dbReference>
<dbReference type="GO" id="GO:0051260">
    <property type="term" value="P:protein homooligomerization"/>
    <property type="evidence" value="ECO:0007669"/>
    <property type="project" value="InterPro"/>
</dbReference>
<dbReference type="GO" id="GO:0016567">
    <property type="term" value="P:protein ubiquitination"/>
    <property type="evidence" value="ECO:0000250"/>
    <property type="project" value="UniProtKB"/>
</dbReference>
<dbReference type="GO" id="GO:0043149">
    <property type="term" value="P:stress fiber assembly"/>
    <property type="evidence" value="ECO:0000250"/>
    <property type="project" value="UniProtKB"/>
</dbReference>
<dbReference type="CDD" id="cd18401">
    <property type="entry name" value="BTB_POZ_TNFAIP1_BACURD2"/>
    <property type="match status" value="1"/>
</dbReference>
<dbReference type="FunFam" id="3.30.710.10:FF:000013">
    <property type="entry name" value="BTB/POZ domain-containing adapter for CUL3-mediated RhoA degradation protein 3"/>
    <property type="match status" value="1"/>
</dbReference>
<dbReference type="Gene3D" id="3.30.710.10">
    <property type="entry name" value="Potassium Channel Kv1.1, Chain A"/>
    <property type="match status" value="1"/>
</dbReference>
<dbReference type="InterPro" id="IPR045068">
    <property type="entry name" value="BACURD1-3"/>
</dbReference>
<dbReference type="InterPro" id="IPR000210">
    <property type="entry name" value="BTB/POZ_dom"/>
</dbReference>
<dbReference type="InterPro" id="IPR011333">
    <property type="entry name" value="SKP1/BTB/POZ_sf"/>
</dbReference>
<dbReference type="InterPro" id="IPR003131">
    <property type="entry name" value="T1-type_BTB"/>
</dbReference>
<dbReference type="PANTHER" id="PTHR11145">
    <property type="entry name" value="BTB/POZ DOMAIN-CONTAINING ADAPTER FOR CUL3-MEDIATED RHOA DEGRADATION PROTEIN FAMILY MEMBER"/>
    <property type="match status" value="1"/>
</dbReference>
<dbReference type="PANTHER" id="PTHR11145:SF17">
    <property type="entry name" value="BTB_POZ DOMAIN-CONTAINING ADAPTER FOR CUL3-MEDIATED RHOA DEGRADATION PROTEIN 2"/>
    <property type="match status" value="1"/>
</dbReference>
<dbReference type="Pfam" id="PF02214">
    <property type="entry name" value="BTB_2"/>
    <property type="match status" value="1"/>
</dbReference>
<dbReference type="SMART" id="SM00225">
    <property type="entry name" value="BTB"/>
    <property type="match status" value="1"/>
</dbReference>
<dbReference type="SUPFAM" id="SSF54695">
    <property type="entry name" value="POZ domain"/>
    <property type="match status" value="1"/>
</dbReference>
<dbReference type="PROSITE" id="PS50097">
    <property type="entry name" value="BTB"/>
    <property type="match status" value="1"/>
</dbReference>
<name>BACD2_CHICK</name>
<accession>Q5F3E8</accession>
<evidence type="ECO:0000250" key="1"/>
<evidence type="ECO:0000255" key="2">
    <source>
        <dbReference type="PROSITE-ProRule" id="PRU00037"/>
    </source>
</evidence>
<evidence type="ECO:0000305" key="3"/>